<reference key="1">
    <citation type="submission" date="2005-08" db="EMBL/GenBank/DDBJ databases">
        <title>Complete sequence of Synechococcus sp. CC9902.</title>
        <authorList>
            <person name="Copeland A."/>
            <person name="Lucas S."/>
            <person name="Lapidus A."/>
            <person name="Barry K."/>
            <person name="Detter J.C."/>
            <person name="Glavina T."/>
            <person name="Hammon N."/>
            <person name="Israni S."/>
            <person name="Pitluck S."/>
            <person name="Martinez M."/>
            <person name="Schmutz J."/>
            <person name="Larimer F."/>
            <person name="Land M."/>
            <person name="Kyrpides N."/>
            <person name="Ivanova N."/>
            <person name="Richardson P."/>
        </authorList>
    </citation>
    <scope>NUCLEOTIDE SEQUENCE [LARGE SCALE GENOMIC DNA]</scope>
    <source>
        <strain>CC9902</strain>
    </source>
</reference>
<evidence type="ECO:0000255" key="1">
    <source>
        <dbReference type="HAMAP-Rule" id="MF_00384"/>
    </source>
</evidence>
<sequence>MAQPRIGQRVIVDVPATTANLGPGFDCLGAALDLNNRFAMRRIEGGGERFELIIEGSEGSHLRGGPENLVYRAAQRVWKAAGLEPVALEARVRLAVPPARGLGSSATAIVAGLMGANALVGEPLSKEKLLELAIDIEGHPDNVVPSLLGGLCMTAKAASQRWRVVRCEWTSTVKAVVAIPSIRLSTSEARRAMPKAIPVSDAVVNLGALTLLLQGLRTGNGDLISDGMHDRLHEPYRWRLIKGGDQVKQAAMDAGAWGCAISGAGPSVLALCAEDKGMAVSRAMVRAWEAAGVASRAPVLNVQTTGSHWQPADDE</sequence>
<gene>
    <name evidence="1" type="primary">thrB</name>
    <name type="ordered locus">Syncc9902_0932</name>
</gene>
<accession>Q3AYC9</accession>
<proteinExistence type="inferred from homology"/>
<name>KHSE_SYNS9</name>
<feature type="chain" id="PRO_1000049187" description="Homoserine kinase">
    <location>
        <begin position="1"/>
        <end position="315"/>
    </location>
</feature>
<feature type="binding site" evidence="1">
    <location>
        <begin position="97"/>
        <end position="107"/>
    </location>
    <ligand>
        <name>ATP</name>
        <dbReference type="ChEBI" id="CHEBI:30616"/>
    </ligand>
</feature>
<organism>
    <name type="scientific">Synechococcus sp. (strain CC9902)</name>
    <dbReference type="NCBI Taxonomy" id="316279"/>
    <lineage>
        <taxon>Bacteria</taxon>
        <taxon>Bacillati</taxon>
        <taxon>Cyanobacteriota</taxon>
        <taxon>Cyanophyceae</taxon>
        <taxon>Synechococcales</taxon>
        <taxon>Synechococcaceae</taxon>
        <taxon>Synechococcus</taxon>
    </lineage>
</organism>
<dbReference type="EC" id="2.7.1.39" evidence="1"/>
<dbReference type="EMBL" id="CP000097">
    <property type="protein sequence ID" value="ABB25898.1"/>
    <property type="molecule type" value="Genomic_DNA"/>
</dbReference>
<dbReference type="RefSeq" id="WP_011359734.1">
    <property type="nucleotide sequence ID" value="NC_007513.1"/>
</dbReference>
<dbReference type="SMR" id="Q3AYC9"/>
<dbReference type="STRING" id="316279.Syncc9902_0932"/>
<dbReference type="KEGG" id="sye:Syncc9902_0932"/>
<dbReference type="eggNOG" id="COG0083">
    <property type="taxonomic scope" value="Bacteria"/>
</dbReference>
<dbReference type="HOGENOM" id="CLU_041243_0_2_3"/>
<dbReference type="OrthoDB" id="9769912at2"/>
<dbReference type="UniPathway" id="UPA00050">
    <property type="reaction ID" value="UER00064"/>
</dbReference>
<dbReference type="Proteomes" id="UP000002712">
    <property type="component" value="Chromosome"/>
</dbReference>
<dbReference type="GO" id="GO:0005737">
    <property type="term" value="C:cytoplasm"/>
    <property type="evidence" value="ECO:0007669"/>
    <property type="project" value="UniProtKB-SubCell"/>
</dbReference>
<dbReference type="GO" id="GO:0005524">
    <property type="term" value="F:ATP binding"/>
    <property type="evidence" value="ECO:0007669"/>
    <property type="project" value="UniProtKB-UniRule"/>
</dbReference>
<dbReference type="GO" id="GO:0004413">
    <property type="term" value="F:homoserine kinase activity"/>
    <property type="evidence" value="ECO:0007669"/>
    <property type="project" value="UniProtKB-UniRule"/>
</dbReference>
<dbReference type="GO" id="GO:0009088">
    <property type="term" value="P:threonine biosynthetic process"/>
    <property type="evidence" value="ECO:0007669"/>
    <property type="project" value="UniProtKB-UniRule"/>
</dbReference>
<dbReference type="Gene3D" id="3.30.230.10">
    <property type="match status" value="1"/>
</dbReference>
<dbReference type="Gene3D" id="3.30.70.890">
    <property type="entry name" value="GHMP kinase, C-terminal domain"/>
    <property type="match status" value="1"/>
</dbReference>
<dbReference type="HAMAP" id="MF_00384">
    <property type="entry name" value="Homoser_kinase"/>
    <property type="match status" value="1"/>
</dbReference>
<dbReference type="InterPro" id="IPR013750">
    <property type="entry name" value="GHMP_kinase_C_dom"/>
</dbReference>
<dbReference type="InterPro" id="IPR036554">
    <property type="entry name" value="GHMP_kinase_C_sf"/>
</dbReference>
<dbReference type="InterPro" id="IPR006204">
    <property type="entry name" value="GHMP_kinase_N_dom"/>
</dbReference>
<dbReference type="InterPro" id="IPR006203">
    <property type="entry name" value="GHMP_knse_ATP-bd_CS"/>
</dbReference>
<dbReference type="InterPro" id="IPR000870">
    <property type="entry name" value="Homoserine_kinase"/>
</dbReference>
<dbReference type="InterPro" id="IPR020568">
    <property type="entry name" value="Ribosomal_Su5_D2-typ_SF"/>
</dbReference>
<dbReference type="InterPro" id="IPR014721">
    <property type="entry name" value="Ribsml_uS5_D2-typ_fold_subgr"/>
</dbReference>
<dbReference type="NCBIfam" id="NF002288">
    <property type="entry name" value="PRK01212.1-4"/>
    <property type="match status" value="1"/>
</dbReference>
<dbReference type="NCBIfam" id="TIGR00191">
    <property type="entry name" value="thrB"/>
    <property type="match status" value="1"/>
</dbReference>
<dbReference type="PANTHER" id="PTHR20861:SF1">
    <property type="entry name" value="HOMOSERINE KINASE"/>
    <property type="match status" value="1"/>
</dbReference>
<dbReference type="PANTHER" id="PTHR20861">
    <property type="entry name" value="HOMOSERINE/4-DIPHOSPHOCYTIDYL-2-C-METHYL-D-ERYTHRITOL KINASE"/>
    <property type="match status" value="1"/>
</dbReference>
<dbReference type="Pfam" id="PF08544">
    <property type="entry name" value="GHMP_kinases_C"/>
    <property type="match status" value="1"/>
</dbReference>
<dbReference type="Pfam" id="PF00288">
    <property type="entry name" value="GHMP_kinases_N"/>
    <property type="match status" value="1"/>
</dbReference>
<dbReference type="PIRSF" id="PIRSF000676">
    <property type="entry name" value="Homoser_kin"/>
    <property type="match status" value="1"/>
</dbReference>
<dbReference type="PRINTS" id="PR00958">
    <property type="entry name" value="HOMSERKINASE"/>
</dbReference>
<dbReference type="SUPFAM" id="SSF55060">
    <property type="entry name" value="GHMP Kinase, C-terminal domain"/>
    <property type="match status" value="1"/>
</dbReference>
<dbReference type="SUPFAM" id="SSF54211">
    <property type="entry name" value="Ribosomal protein S5 domain 2-like"/>
    <property type="match status" value="1"/>
</dbReference>
<dbReference type="PROSITE" id="PS00627">
    <property type="entry name" value="GHMP_KINASES_ATP"/>
    <property type="match status" value="1"/>
</dbReference>
<comment type="function">
    <text evidence="1">Catalyzes the ATP-dependent phosphorylation of L-homoserine to L-homoserine phosphate.</text>
</comment>
<comment type="catalytic activity">
    <reaction evidence="1">
        <text>L-homoserine + ATP = O-phospho-L-homoserine + ADP + H(+)</text>
        <dbReference type="Rhea" id="RHEA:13985"/>
        <dbReference type="ChEBI" id="CHEBI:15378"/>
        <dbReference type="ChEBI" id="CHEBI:30616"/>
        <dbReference type="ChEBI" id="CHEBI:57476"/>
        <dbReference type="ChEBI" id="CHEBI:57590"/>
        <dbReference type="ChEBI" id="CHEBI:456216"/>
        <dbReference type="EC" id="2.7.1.39"/>
    </reaction>
</comment>
<comment type="pathway">
    <text evidence="1">Amino-acid biosynthesis; L-threonine biosynthesis; L-threonine from L-aspartate: step 4/5.</text>
</comment>
<comment type="subcellular location">
    <subcellularLocation>
        <location evidence="1">Cytoplasm</location>
    </subcellularLocation>
</comment>
<comment type="similarity">
    <text evidence="1">Belongs to the GHMP kinase family. Homoserine kinase subfamily.</text>
</comment>
<keyword id="KW-0028">Amino-acid biosynthesis</keyword>
<keyword id="KW-0067">ATP-binding</keyword>
<keyword id="KW-0963">Cytoplasm</keyword>
<keyword id="KW-0418">Kinase</keyword>
<keyword id="KW-0547">Nucleotide-binding</keyword>
<keyword id="KW-1185">Reference proteome</keyword>
<keyword id="KW-0791">Threonine biosynthesis</keyword>
<keyword id="KW-0808">Transferase</keyword>
<protein>
    <recommendedName>
        <fullName evidence="1">Homoserine kinase</fullName>
        <shortName evidence="1">HK</shortName>
        <shortName evidence="1">HSK</shortName>
        <ecNumber evidence="1">2.7.1.39</ecNumber>
    </recommendedName>
</protein>